<organism>
    <name type="scientific">Escherichia coli (strain K12 / DH10B)</name>
    <dbReference type="NCBI Taxonomy" id="316385"/>
    <lineage>
        <taxon>Bacteria</taxon>
        <taxon>Pseudomonadati</taxon>
        <taxon>Pseudomonadota</taxon>
        <taxon>Gammaproteobacteria</taxon>
        <taxon>Enterobacterales</taxon>
        <taxon>Enterobacteriaceae</taxon>
        <taxon>Escherichia</taxon>
    </lineage>
</organism>
<proteinExistence type="inferred from homology"/>
<feature type="chain" id="PRO_1000121057" description="Beta-hexosaminidase">
    <location>
        <begin position="1"/>
        <end position="341"/>
    </location>
</feature>
<feature type="active site" description="Proton donor/acceptor" evidence="1">
    <location>
        <position position="176"/>
    </location>
</feature>
<feature type="active site" description="Nucleophile" evidence="1">
    <location>
        <position position="248"/>
    </location>
</feature>
<feature type="binding site" evidence="1">
    <location>
        <position position="62"/>
    </location>
    <ligand>
        <name>substrate</name>
    </ligand>
</feature>
<feature type="binding site" evidence="1">
    <location>
        <position position="70"/>
    </location>
    <ligand>
        <name>substrate</name>
    </ligand>
</feature>
<feature type="binding site" evidence="1">
    <location>
        <position position="133"/>
    </location>
    <ligand>
        <name>substrate</name>
    </ligand>
</feature>
<feature type="binding site" evidence="1">
    <location>
        <begin position="163"/>
        <end position="164"/>
    </location>
    <ligand>
        <name>substrate</name>
    </ligand>
</feature>
<feature type="site" description="Important for catalytic activity" evidence="1">
    <location>
        <position position="174"/>
    </location>
</feature>
<accession>B1XA17</accession>
<evidence type="ECO:0000255" key="1">
    <source>
        <dbReference type="HAMAP-Rule" id="MF_00364"/>
    </source>
</evidence>
<sequence>MGPVMLDVEGYELDAEEREILAHPLVGGLILFTRNYHDPAQLRELVRQIRAASRNRLVVAVDQEGGRVQRFREGFTRLPAAQSFAALSGMEEGGKLAQEAGWLMASEMIAMDIDISFAPVLDVGHISAAIGERSYHADPQKALAIASRFIDGMHEAGMKTTGKHFPGHGAVTADSHKETPCDPRPQAEIRAKDMSVFSSLIRENKLDAIMPAHVIYSDVDPRPASGSPYWLKTVLRQELGFDGVIFSDDLSMEGAAIMGSYAERGQASLDAGCDMILVCNNRKGAVSVLDNLSPIKAERVTRLYHKGSFSRQELMDSARWKAISTRLNQLHERWQEEKAGH</sequence>
<reference key="1">
    <citation type="journal article" date="2008" name="J. Bacteriol.">
        <title>The complete genome sequence of Escherichia coli DH10B: insights into the biology of a laboratory workhorse.</title>
        <authorList>
            <person name="Durfee T."/>
            <person name="Nelson R."/>
            <person name="Baldwin S."/>
            <person name="Plunkett G. III"/>
            <person name="Burland V."/>
            <person name="Mau B."/>
            <person name="Petrosino J.F."/>
            <person name="Qin X."/>
            <person name="Muzny D.M."/>
            <person name="Ayele M."/>
            <person name="Gibbs R.A."/>
            <person name="Csorgo B."/>
            <person name="Posfai G."/>
            <person name="Weinstock G.M."/>
            <person name="Blattner F.R."/>
        </authorList>
    </citation>
    <scope>NUCLEOTIDE SEQUENCE [LARGE SCALE GENOMIC DNA]</scope>
    <source>
        <strain>K12 / DH10B</strain>
    </source>
</reference>
<name>NAGZ_ECODH</name>
<keyword id="KW-0131">Cell cycle</keyword>
<keyword id="KW-0132">Cell division</keyword>
<keyword id="KW-0133">Cell shape</keyword>
<keyword id="KW-0961">Cell wall biogenesis/degradation</keyword>
<keyword id="KW-0963">Cytoplasm</keyword>
<keyword id="KW-0326">Glycosidase</keyword>
<keyword id="KW-0378">Hydrolase</keyword>
<keyword id="KW-0573">Peptidoglycan synthesis</keyword>
<dbReference type="EC" id="3.2.1.52" evidence="1"/>
<dbReference type="EMBL" id="CP000948">
    <property type="protein sequence ID" value="ACB02300.1"/>
    <property type="molecule type" value="Genomic_DNA"/>
</dbReference>
<dbReference type="RefSeq" id="WP_000529320.1">
    <property type="nucleotide sequence ID" value="NC_010473.1"/>
</dbReference>
<dbReference type="SMR" id="B1XA17"/>
<dbReference type="CAZy" id="GH3">
    <property type="family name" value="Glycoside Hydrolase Family 3"/>
</dbReference>
<dbReference type="KEGG" id="ecd:ECDH10B_1179"/>
<dbReference type="HOGENOM" id="CLU_008392_0_0_6"/>
<dbReference type="UniPathway" id="UPA00544"/>
<dbReference type="GO" id="GO:0005737">
    <property type="term" value="C:cytoplasm"/>
    <property type="evidence" value="ECO:0007669"/>
    <property type="project" value="UniProtKB-SubCell"/>
</dbReference>
<dbReference type="GO" id="GO:0004563">
    <property type="term" value="F:beta-N-acetylhexosaminidase activity"/>
    <property type="evidence" value="ECO:0007669"/>
    <property type="project" value="UniProtKB-UniRule"/>
</dbReference>
<dbReference type="GO" id="GO:0005975">
    <property type="term" value="P:carbohydrate metabolic process"/>
    <property type="evidence" value="ECO:0007669"/>
    <property type="project" value="InterPro"/>
</dbReference>
<dbReference type="GO" id="GO:0051301">
    <property type="term" value="P:cell division"/>
    <property type="evidence" value="ECO:0007669"/>
    <property type="project" value="UniProtKB-KW"/>
</dbReference>
<dbReference type="GO" id="GO:0071555">
    <property type="term" value="P:cell wall organization"/>
    <property type="evidence" value="ECO:0007669"/>
    <property type="project" value="UniProtKB-KW"/>
</dbReference>
<dbReference type="GO" id="GO:0009252">
    <property type="term" value="P:peptidoglycan biosynthetic process"/>
    <property type="evidence" value="ECO:0007669"/>
    <property type="project" value="UniProtKB-KW"/>
</dbReference>
<dbReference type="GO" id="GO:0009254">
    <property type="term" value="P:peptidoglycan turnover"/>
    <property type="evidence" value="ECO:0007669"/>
    <property type="project" value="UniProtKB-UniRule"/>
</dbReference>
<dbReference type="GO" id="GO:0008360">
    <property type="term" value="P:regulation of cell shape"/>
    <property type="evidence" value="ECO:0007669"/>
    <property type="project" value="UniProtKB-KW"/>
</dbReference>
<dbReference type="FunFam" id="3.20.20.300:FF:000001">
    <property type="entry name" value="Beta-hexosaminidase"/>
    <property type="match status" value="1"/>
</dbReference>
<dbReference type="Gene3D" id="3.20.20.300">
    <property type="entry name" value="Glycoside hydrolase, family 3, N-terminal domain"/>
    <property type="match status" value="1"/>
</dbReference>
<dbReference type="HAMAP" id="MF_00364">
    <property type="entry name" value="NagZ"/>
    <property type="match status" value="1"/>
</dbReference>
<dbReference type="InterPro" id="IPR022956">
    <property type="entry name" value="Beta_hexosaminidase_bac"/>
</dbReference>
<dbReference type="InterPro" id="IPR019800">
    <property type="entry name" value="Glyco_hydro_3_AS"/>
</dbReference>
<dbReference type="InterPro" id="IPR001764">
    <property type="entry name" value="Glyco_hydro_3_N"/>
</dbReference>
<dbReference type="InterPro" id="IPR036962">
    <property type="entry name" value="Glyco_hydro_3_N_sf"/>
</dbReference>
<dbReference type="InterPro" id="IPR017853">
    <property type="entry name" value="Glycoside_hydrolase_SF"/>
</dbReference>
<dbReference type="InterPro" id="IPR050226">
    <property type="entry name" value="NagZ_Beta-hexosaminidase"/>
</dbReference>
<dbReference type="NCBIfam" id="NF003740">
    <property type="entry name" value="PRK05337.1"/>
    <property type="match status" value="1"/>
</dbReference>
<dbReference type="PANTHER" id="PTHR30480:SF13">
    <property type="entry name" value="BETA-HEXOSAMINIDASE"/>
    <property type="match status" value="1"/>
</dbReference>
<dbReference type="PANTHER" id="PTHR30480">
    <property type="entry name" value="BETA-HEXOSAMINIDASE-RELATED"/>
    <property type="match status" value="1"/>
</dbReference>
<dbReference type="Pfam" id="PF00933">
    <property type="entry name" value="Glyco_hydro_3"/>
    <property type="match status" value="1"/>
</dbReference>
<dbReference type="SUPFAM" id="SSF51445">
    <property type="entry name" value="(Trans)glycosidases"/>
    <property type="match status" value="1"/>
</dbReference>
<dbReference type="PROSITE" id="PS00775">
    <property type="entry name" value="GLYCOSYL_HYDROL_F3"/>
    <property type="match status" value="1"/>
</dbReference>
<comment type="function">
    <text evidence="1">Plays a role in peptidoglycan recycling by cleaving the terminal beta-1,4-linked N-acetylglucosamine (GlcNAc) from peptide-linked peptidoglycan fragments, giving rise to free GlcNAc, anhydro-N-acetylmuramic acid and anhydro-N-acetylmuramic acid-linked peptides.</text>
</comment>
<comment type="catalytic activity">
    <reaction evidence="1">
        <text>Hydrolysis of terminal non-reducing N-acetyl-D-hexosamine residues in N-acetyl-beta-D-hexosaminides.</text>
        <dbReference type="EC" id="3.2.1.52"/>
    </reaction>
</comment>
<comment type="pathway">
    <text evidence="1">Cell wall biogenesis; peptidoglycan recycling.</text>
</comment>
<comment type="subcellular location">
    <subcellularLocation>
        <location evidence="1">Cytoplasm</location>
    </subcellularLocation>
</comment>
<comment type="similarity">
    <text evidence="1">Belongs to the glycosyl hydrolase 3 family. NagZ subfamily.</text>
</comment>
<protein>
    <recommendedName>
        <fullName evidence="1">Beta-hexosaminidase</fullName>
        <ecNumber evidence="1">3.2.1.52</ecNumber>
    </recommendedName>
    <alternativeName>
        <fullName evidence="1">Beta-N-acetylhexosaminidase</fullName>
    </alternativeName>
    <alternativeName>
        <fullName evidence="1">N-acetyl-beta-glucosaminidase</fullName>
    </alternativeName>
</protein>
<gene>
    <name evidence="1" type="primary">nagZ</name>
    <name type="ordered locus">ECDH10B_1179</name>
</gene>